<feature type="chain" id="PRO_1000115739" description="1-deoxy-D-xylulose-5-phosphate synthase">
    <location>
        <begin position="1"/>
        <end position="620"/>
    </location>
</feature>
<feature type="binding site" evidence="1">
    <location>
        <position position="80"/>
    </location>
    <ligand>
        <name>thiamine diphosphate</name>
        <dbReference type="ChEBI" id="CHEBI:58937"/>
    </ligand>
</feature>
<feature type="binding site" evidence="1">
    <location>
        <begin position="121"/>
        <end position="123"/>
    </location>
    <ligand>
        <name>thiamine diphosphate</name>
        <dbReference type="ChEBI" id="CHEBI:58937"/>
    </ligand>
</feature>
<feature type="binding site" evidence="1">
    <location>
        <position position="152"/>
    </location>
    <ligand>
        <name>Mg(2+)</name>
        <dbReference type="ChEBI" id="CHEBI:18420"/>
    </ligand>
</feature>
<feature type="binding site" evidence="1">
    <location>
        <begin position="153"/>
        <end position="154"/>
    </location>
    <ligand>
        <name>thiamine diphosphate</name>
        <dbReference type="ChEBI" id="CHEBI:58937"/>
    </ligand>
</feature>
<feature type="binding site" evidence="1">
    <location>
        <position position="181"/>
    </location>
    <ligand>
        <name>Mg(2+)</name>
        <dbReference type="ChEBI" id="CHEBI:18420"/>
    </ligand>
</feature>
<feature type="binding site" evidence="1">
    <location>
        <position position="181"/>
    </location>
    <ligand>
        <name>thiamine diphosphate</name>
        <dbReference type="ChEBI" id="CHEBI:58937"/>
    </ligand>
</feature>
<feature type="binding site" evidence="1">
    <location>
        <position position="288"/>
    </location>
    <ligand>
        <name>thiamine diphosphate</name>
        <dbReference type="ChEBI" id="CHEBI:58937"/>
    </ligand>
</feature>
<feature type="binding site" evidence="1">
    <location>
        <position position="370"/>
    </location>
    <ligand>
        <name>thiamine diphosphate</name>
        <dbReference type="ChEBI" id="CHEBI:58937"/>
    </ligand>
</feature>
<reference key="1">
    <citation type="journal article" date="2008" name="J. Bacteriol.">
        <title>The complete genome sequence of Escherichia coli DH10B: insights into the biology of a laboratory workhorse.</title>
        <authorList>
            <person name="Durfee T."/>
            <person name="Nelson R."/>
            <person name="Baldwin S."/>
            <person name="Plunkett G. III"/>
            <person name="Burland V."/>
            <person name="Mau B."/>
            <person name="Petrosino J.F."/>
            <person name="Qin X."/>
            <person name="Muzny D.M."/>
            <person name="Ayele M."/>
            <person name="Gibbs R.A."/>
            <person name="Csorgo B."/>
            <person name="Posfai G."/>
            <person name="Weinstock G.M."/>
            <person name="Blattner F.R."/>
        </authorList>
    </citation>
    <scope>NUCLEOTIDE SEQUENCE [LARGE SCALE GENOMIC DNA]</scope>
    <source>
        <strain>K12 / DH10B</strain>
    </source>
</reference>
<keyword id="KW-0414">Isoprene biosynthesis</keyword>
<keyword id="KW-0460">Magnesium</keyword>
<keyword id="KW-0479">Metal-binding</keyword>
<keyword id="KW-0784">Thiamine biosynthesis</keyword>
<keyword id="KW-0786">Thiamine pyrophosphate</keyword>
<keyword id="KW-0808">Transferase</keyword>
<dbReference type="EC" id="2.2.1.7" evidence="1"/>
<dbReference type="EMBL" id="CP000948">
    <property type="protein sequence ID" value="ACB01548.1"/>
    <property type="molecule type" value="Genomic_DNA"/>
</dbReference>
<dbReference type="RefSeq" id="WP_000006797.1">
    <property type="nucleotide sequence ID" value="NC_010473.1"/>
</dbReference>
<dbReference type="SMR" id="B1XF08"/>
<dbReference type="KEGG" id="ecd:ECDH10B_0376"/>
<dbReference type="HOGENOM" id="CLU_009227_1_4_6"/>
<dbReference type="UniPathway" id="UPA00064">
    <property type="reaction ID" value="UER00091"/>
</dbReference>
<dbReference type="GO" id="GO:0005829">
    <property type="term" value="C:cytosol"/>
    <property type="evidence" value="ECO:0007669"/>
    <property type="project" value="TreeGrafter"/>
</dbReference>
<dbReference type="GO" id="GO:0008661">
    <property type="term" value="F:1-deoxy-D-xylulose-5-phosphate synthase activity"/>
    <property type="evidence" value="ECO:0007669"/>
    <property type="project" value="UniProtKB-UniRule"/>
</dbReference>
<dbReference type="GO" id="GO:0000287">
    <property type="term" value="F:magnesium ion binding"/>
    <property type="evidence" value="ECO:0007669"/>
    <property type="project" value="UniProtKB-UniRule"/>
</dbReference>
<dbReference type="GO" id="GO:0030976">
    <property type="term" value="F:thiamine pyrophosphate binding"/>
    <property type="evidence" value="ECO:0007669"/>
    <property type="project" value="UniProtKB-UniRule"/>
</dbReference>
<dbReference type="GO" id="GO:0052865">
    <property type="term" value="P:1-deoxy-D-xylulose 5-phosphate biosynthetic process"/>
    <property type="evidence" value="ECO:0007669"/>
    <property type="project" value="UniProtKB-UniPathway"/>
</dbReference>
<dbReference type="GO" id="GO:0019288">
    <property type="term" value="P:isopentenyl diphosphate biosynthetic process, methylerythritol 4-phosphate pathway"/>
    <property type="evidence" value="ECO:0007669"/>
    <property type="project" value="TreeGrafter"/>
</dbReference>
<dbReference type="GO" id="GO:0016114">
    <property type="term" value="P:terpenoid biosynthetic process"/>
    <property type="evidence" value="ECO:0007669"/>
    <property type="project" value="UniProtKB-UniRule"/>
</dbReference>
<dbReference type="GO" id="GO:0009228">
    <property type="term" value="P:thiamine biosynthetic process"/>
    <property type="evidence" value="ECO:0007669"/>
    <property type="project" value="UniProtKB-UniRule"/>
</dbReference>
<dbReference type="CDD" id="cd02007">
    <property type="entry name" value="TPP_DXS"/>
    <property type="match status" value="1"/>
</dbReference>
<dbReference type="CDD" id="cd07033">
    <property type="entry name" value="TPP_PYR_DXS_TK_like"/>
    <property type="match status" value="1"/>
</dbReference>
<dbReference type="FunFam" id="3.40.50.920:FF:000002">
    <property type="entry name" value="1-deoxy-D-xylulose-5-phosphate synthase"/>
    <property type="match status" value="1"/>
</dbReference>
<dbReference type="FunFam" id="3.40.50.970:FF:000005">
    <property type="entry name" value="1-deoxy-D-xylulose-5-phosphate synthase"/>
    <property type="match status" value="1"/>
</dbReference>
<dbReference type="Gene3D" id="3.40.50.920">
    <property type="match status" value="1"/>
</dbReference>
<dbReference type="Gene3D" id="3.40.50.970">
    <property type="match status" value="2"/>
</dbReference>
<dbReference type="HAMAP" id="MF_00315">
    <property type="entry name" value="DXP_synth"/>
    <property type="match status" value="1"/>
</dbReference>
<dbReference type="InterPro" id="IPR005477">
    <property type="entry name" value="Dxylulose-5-P_synthase"/>
</dbReference>
<dbReference type="InterPro" id="IPR029061">
    <property type="entry name" value="THDP-binding"/>
</dbReference>
<dbReference type="InterPro" id="IPR009014">
    <property type="entry name" value="Transketo_C/PFOR_II"/>
</dbReference>
<dbReference type="InterPro" id="IPR005475">
    <property type="entry name" value="Transketolase-like_Pyr-bd"/>
</dbReference>
<dbReference type="InterPro" id="IPR020826">
    <property type="entry name" value="Transketolase_BS"/>
</dbReference>
<dbReference type="InterPro" id="IPR033248">
    <property type="entry name" value="Transketolase_C"/>
</dbReference>
<dbReference type="InterPro" id="IPR049557">
    <property type="entry name" value="Transketolase_CS"/>
</dbReference>
<dbReference type="NCBIfam" id="TIGR00204">
    <property type="entry name" value="dxs"/>
    <property type="match status" value="1"/>
</dbReference>
<dbReference type="NCBIfam" id="NF003933">
    <property type="entry name" value="PRK05444.2-2"/>
    <property type="match status" value="1"/>
</dbReference>
<dbReference type="PANTHER" id="PTHR43322">
    <property type="entry name" value="1-D-DEOXYXYLULOSE 5-PHOSPHATE SYNTHASE-RELATED"/>
    <property type="match status" value="1"/>
</dbReference>
<dbReference type="PANTHER" id="PTHR43322:SF5">
    <property type="entry name" value="1-DEOXY-D-XYLULOSE-5-PHOSPHATE SYNTHASE, CHLOROPLASTIC"/>
    <property type="match status" value="1"/>
</dbReference>
<dbReference type="Pfam" id="PF13292">
    <property type="entry name" value="DXP_synthase_N"/>
    <property type="match status" value="1"/>
</dbReference>
<dbReference type="Pfam" id="PF02779">
    <property type="entry name" value="Transket_pyr"/>
    <property type="match status" value="1"/>
</dbReference>
<dbReference type="Pfam" id="PF02780">
    <property type="entry name" value="Transketolase_C"/>
    <property type="match status" value="1"/>
</dbReference>
<dbReference type="SMART" id="SM00861">
    <property type="entry name" value="Transket_pyr"/>
    <property type="match status" value="1"/>
</dbReference>
<dbReference type="SUPFAM" id="SSF52518">
    <property type="entry name" value="Thiamin diphosphate-binding fold (THDP-binding)"/>
    <property type="match status" value="2"/>
</dbReference>
<dbReference type="SUPFAM" id="SSF52922">
    <property type="entry name" value="TK C-terminal domain-like"/>
    <property type="match status" value="1"/>
</dbReference>
<dbReference type="PROSITE" id="PS00801">
    <property type="entry name" value="TRANSKETOLASE_1"/>
    <property type="match status" value="1"/>
</dbReference>
<dbReference type="PROSITE" id="PS00802">
    <property type="entry name" value="TRANSKETOLASE_2"/>
    <property type="match status" value="1"/>
</dbReference>
<organism>
    <name type="scientific">Escherichia coli (strain K12 / DH10B)</name>
    <dbReference type="NCBI Taxonomy" id="316385"/>
    <lineage>
        <taxon>Bacteria</taxon>
        <taxon>Pseudomonadati</taxon>
        <taxon>Pseudomonadota</taxon>
        <taxon>Gammaproteobacteria</taxon>
        <taxon>Enterobacterales</taxon>
        <taxon>Enterobacteriaceae</taxon>
        <taxon>Escherichia</taxon>
    </lineage>
</organism>
<evidence type="ECO:0000255" key="1">
    <source>
        <dbReference type="HAMAP-Rule" id="MF_00315"/>
    </source>
</evidence>
<sequence length="620" mass="67617">MSFDIAKYPTLALVDSTQELRLLPKESLPKLCDELRRYLLDSVSRSSGHFASGLGTVELTVALHYVYNTPFDQLIWDVGHQAYPHKILTGRRDKIGTIRQKGGLHPFPWRGESEYDVLSVGHSSTSISAGIGIAVAAEKEGKNRRTVCVIGDGAITAGMAFEAMNHAGDIRPDMLVILNDNEMSISENVGALNNHLAQLLSGKLYSSLREGGKKVFSGVPPIKELLKRTEEHIKGMVVPGTLFEELGFNYIGPVDGHDVLGLITTLKNMRDLKGPQFLHIMTKKGRGYEPAEKDPITFHAVPKFDPSSGCLPKSSGGLPSYSKIFGDWLCETAAKDNKLMAITPAMREGSGMVEFSRKFPDRYFDVAIAEQHAVTFAAGLAIGGYKPIVAIYSTFLQRAYDQVLHDVAIQKLPVLFAIDRAGIVGADGQTHQGAFDLSYLRCIPEMVIMTPSDENECRQMLYTGYHYNDGPSAVRYPRGNAVGVELTPLEKLPIGKGIVKRRGEKLAILNFGTLMPEAAKVAESLNATLVDMRFVKPLDEALILEMAASHEALVTVEENAIMGGAGSGVNEVLMAHRKPVPVLNIGLPDFFIPQGTQEEMRAELGLDAAGMEAKIKAWLA</sequence>
<accession>B1XF08</accession>
<protein>
    <recommendedName>
        <fullName evidence="1">1-deoxy-D-xylulose-5-phosphate synthase</fullName>
        <ecNumber evidence="1">2.2.1.7</ecNumber>
    </recommendedName>
    <alternativeName>
        <fullName evidence="1">1-deoxyxylulose-5-phosphate synthase</fullName>
        <shortName evidence="1">DXP synthase</shortName>
        <shortName evidence="1">DXPS</shortName>
    </alternativeName>
</protein>
<name>DXS_ECODH</name>
<gene>
    <name evidence="1" type="primary">dxs</name>
    <name type="ordered locus">ECDH10B_0376</name>
</gene>
<comment type="function">
    <text evidence="1">Catalyzes the acyloin condensation reaction between C atoms 2 and 3 of pyruvate and glyceraldehyde 3-phosphate to yield 1-deoxy-D-xylulose-5-phosphate (DXP).</text>
</comment>
<comment type="catalytic activity">
    <reaction evidence="1">
        <text>D-glyceraldehyde 3-phosphate + pyruvate + H(+) = 1-deoxy-D-xylulose 5-phosphate + CO2</text>
        <dbReference type="Rhea" id="RHEA:12605"/>
        <dbReference type="ChEBI" id="CHEBI:15361"/>
        <dbReference type="ChEBI" id="CHEBI:15378"/>
        <dbReference type="ChEBI" id="CHEBI:16526"/>
        <dbReference type="ChEBI" id="CHEBI:57792"/>
        <dbReference type="ChEBI" id="CHEBI:59776"/>
        <dbReference type="EC" id="2.2.1.7"/>
    </reaction>
</comment>
<comment type="cofactor">
    <cofactor evidence="1">
        <name>Mg(2+)</name>
        <dbReference type="ChEBI" id="CHEBI:18420"/>
    </cofactor>
    <text evidence="1">Binds 1 Mg(2+) ion per subunit.</text>
</comment>
<comment type="cofactor">
    <cofactor evidence="1">
        <name>thiamine diphosphate</name>
        <dbReference type="ChEBI" id="CHEBI:58937"/>
    </cofactor>
    <text evidence="1">Binds 1 thiamine pyrophosphate per subunit.</text>
</comment>
<comment type="pathway">
    <text evidence="1">Metabolic intermediate biosynthesis; 1-deoxy-D-xylulose 5-phosphate biosynthesis; 1-deoxy-D-xylulose 5-phosphate from D-glyceraldehyde 3-phosphate and pyruvate: step 1/1.</text>
</comment>
<comment type="subunit">
    <text evidence="1">Homodimer.</text>
</comment>
<comment type="similarity">
    <text evidence="1">Belongs to the transketolase family. DXPS subfamily.</text>
</comment>
<proteinExistence type="inferred from homology"/>